<keyword id="KW-0963">Cytoplasm</keyword>
<keyword id="KW-0385">Hypusine</keyword>
<keyword id="KW-0396">Initiation factor</keyword>
<keyword id="KW-0648">Protein biosynthesis</keyword>
<keyword id="KW-1185">Reference proteome</keyword>
<name>IF5A_THEAC</name>
<feature type="chain" id="PRO_0000142506" description="Translation initiation factor 5A">
    <location>
        <begin position="1"/>
        <end position="129"/>
    </location>
</feature>
<feature type="modified residue" description="Hypusine" evidence="1">
    <location>
        <position position="36"/>
    </location>
</feature>
<protein>
    <recommendedName>
        <fullName>Translation initiation factor 5A</fullName>
    </recommendedName>
    <alternativeName>
        <fullName>Hypusine-containing protein</fullName>
    </alternativeName>
    <alternativeName>
        <fullName>eIF-5A</fullName>
    </alternativeName>
</protein>
<evidence type="ECO:0000250" key="1"/>
<evidence type="ECO:0000305" key="2"/>
<comment type="function">
    <text evidence="1">Functions by promoting the formation of the first peptide bond.</text>
</comment>
<comment type="subcellular location">
    <subcellularLocation>
        <location evidence="1">Cytoplasm</location>
    </subcellularLocation>
</comment>
<comment type="similarity">
    <text evidence="2">Belongs to the eIF-5A family.</text>
</comment>
<sequence>MSWQEAEVRELKVGRYILIDDAPCKIVEITMSKPGKHGEAKGRIVAIGVFDNQKRSVVYPVKHKVKIPIIEKKNAQVLSVQNNEVQLMDSETFETFVLPLDPEIADKIKPGMEVPYWETMGMRKIMLQN</sequence>
<proteinExistence type="inferred from homology"/>
<reference key="1">
    <citation type="journal article" date="2000" name="Nature">
        <title>The genome sequence of the thermoacidophilic scavenger Thermoplasma acidophilum.</title>
        <authorList>
            <person name="Ruepp A."/>
            <person name="Graml W."/>
            <person name="Santos-Martinez M.-L."/>
            <person name="Koretke K.K."/>
            <person name="Volker C."/>
            <person name="Mewes H.-W."/>
            <person name="Frishman D."/>
            <person name="Stocker S."/>
            <person name="Lupas A.N."/>
            <person name="Baumeister W."/>
        </authorList>
    </citation>
    <scope>NUCLEOTIDE SEQUENCE [LARGE SCALE GENOMIC DNA]</scope>
    <source>
        <strain>ATCC 25905 / DSM 1728 / JCM 9062 / NBRC 15155 / AMRC-C165</strain>
    </source>
</reference>
<accession>Q9HJB1</accession>
<dbReference type="EMBL" id="AL445066">
    <property type="protein sequence ID" value="CAC12187.1"/>
    <property type="molecule type" value="Genomic_DNA"/>
</dbReference>
<dbReference type="RefSeq" id="WP_010901470.1">
    <property type="nucleotide sequence ID" value="NC_002578.1"/>
</dbReference>
<dbReference type="SMR" id="Q9HJB1"/>
<dbReference type="FunCoup" id="Q9HJB1">
    <property type="interactions" value="152"/>
</dbReference>
<dbReference type="STRING" id="273075.gene:9572279"/>
<dbReference type="PaxDb" id="273075-Ta1059"/>
<dbReference type="EnsemblBacteria" id="CAC12187">
    <property type="protein sequence ID" value="CAC12187"/>
    <property type="gene ID" value="CAC12187"/>
</dbReference>
<dbReference type="KEGG" id="tac:Ta1059"/>
<dbReference type="eggNOG" id="arCOG04277">
    <property type="taxonomic scope" value="Archaea"/>
</dbReference>
<dbReference type="HOGENOM" id="CLU_102600_3_0_2"/>
<dbReference type="InParanoid" id="Q9HJB1"/>
<dbReference type="OrthoDB" id="23689at2157"/>
<dbReference type="Proteomes" id="UP000001024">
    <property type="component" value="Chromosome"/>
</dbReference>
<dbReference type="GO" id="GO:0005737">
    <property type="term" value="C:cytoplasm"/>
    <property type="evidence" value="ECO:0007669"/>
    <property type="project" value="UniProtKB-SubCell"/>
</dbReference>
<dbReference type="GO" id="GO:0043022">
    <property type="term" value="F:ribosome binding"/>
    <property type="evidence" value="ECO:0007669"/>
    <property type="project" value="InterPro"/>
</dbReference>
<dbReference type="GO" id="GO:0003723">
    <property type="term" value="F:RNA binding"/>
    <property type="evidence" value="ECO:0007669"/>
    <property type="project" value="InterPro"/>
</dbReference>
<dbReference type="GO" id="GO:0003746">
    <property type="term" value="F:translation elongation factor activity"/>
    <property type="evidence" value="ECO:0007669"/>
    <property type="project" value="InterPro"/>
</dbReference>
<dbReference type="GO" id="GO:0003743">
    <property type="term" value="F:translation initiation factor activity"/>
    <property type="evidence" value="ECO:0007669"/>
    <property type="project" value="UniProtKB-UniRule"/>
</dbReference>
<dbReference type="GO" id="GO:0045901">
    <property type="term" value="P:positive regulation of translational elongation"/>
    <property type="evidence" value="ECO:0007669"/>
    <property type="project" value="InterPro"/>
</dbReference>
<dbReference type="GO" id="GO:0045905">
    <property type="term" value="P:positive regulation of translational termination"/>
    <property type="evidence" value="ECO:0007669"/>
    <property type="project" value="InterPro"/>
</dbReference>
<dbReference type="CDD" id="cd04467">
    <property type="entry name" value="S1_aIF5A"/>
    <property type="match status" value="1"/>
</dbReference>
<dbReference type="FunFam" id="2.30.30.30:FF:000038">
    <property type="entry name" value="Translation initiation factor 5A"/>
    <property type="match status" value="1"/>
</dbReference>
<dbReference type="Gene3D" id="2.30.30.30">
    <property type="match status" value="1"/>
</dbReference>
<dbReference type="Gene3D" id="2.40.50.140">
    <property type="entry name" value="Nucleic acid-binding proteins"/>
    <property type="match status" value="1"/>
</dbReference>
<dbReference type="HAMAP" id="MF_00085">
    <property type="entry name" value="eIF_5A"/>
    <property type="match status" value="1"/>
</dbReference>
<dbReference type="InterPro" id="IPR001884">
    <property type="entry name" value="IF5A-like"/>
</dbReference>
<dbReference type="InterPro" id="IPR048670">
    <property type="entry name" value="IF5A-like_N"/>
</dbReference>
<dbReference type="InterPro" id="IPR012340">
    <property type="entry name" value="NA-bd_OB-fold"/>
</dbReference>
<dbReference type="InterPro" id="IPR014722">
    <property type="entry name" value="Rib_uL2_dom2"/>
</dbReference>
<dbReference type="InterPro" id="IPR019769">
    <property type="entry name" value="Trans_elong_IF5A_hypusine_site"/>
</dbReference>
<dbReference type="InterPro" id="IPR022847">
    <property type="entry name" value="Transl_elong_IF5A_arc"/>
</dbReference>
<dbReference type="InterPro" id="IPR020189">
    <property type="entry name" value="Transl_elong_IF5A_C"/>
</dbReference>
<dbReference type="InterPro" id="IPR008991">
    <property type="entry name" value="Translation_prot_SH3-like_sf"/>
</dbReference>
<dbReference type="NCBIfam" id="TIGR00037">
    <property type="entry name" value="eIF_5A"/>
    <property type="match status" value="1"/>
</dbReference>
<dbReference type="NCBIfam" id="NF003076">
    <property type="entry name" value="PRK03999.1"/>
    <property type="match status" value="1"/>
</dbReference>
<dbReference type="PANTHER" id="PTHR11673">
    <property type="entry name" value="TRANSLATION INITIATION FACTOR 5A FAMILY MEMBER"/>
    <property type="match status" value="1"/>
</dbReference>
<dbReference type="Pfam" id="PF01287">
    <property type="entry name" value="eIF-5a"/>
    <property type="match status" value="1"/>
</dbReference>
<dbReference type="Pfam" id="PF21485">
    <property type="entry name" value="IF5A-like_N"/>
    <property type="match status" value="1"/>
</dbReference>
<dbReference type="PIRSF" id="PIRSF003025">
    <property type="entry name" value="eIF5A"/>
    <property type="match status" value="1"/>
</dbReference>
<dbReference type="SMART" id="SM01376">
    <property type="entry name" value="eIF-5a"/>
    <property type="match status" value="1"/>
</dbReference>
<dbReference type="SUPFAM" id="SSF50249">
    <property type="entry name" value="Nucleic acid-binding proteins"/>
    <property type="match status" value="1"/>
</dbReference>
<dbReference type="SUPFAM" id="SSF50104">
    <property type="entry name" value="Translation proteins SH3-like domain"/>
    <property type="match status" value="1"/>
</dbReference>
<dbReference type="PROSITE" id="PS00302">
    <property type="entry name" value="IF5A_HYPUSINE"/>
    <property type="match status" value="1"/>
</dbReference>
<organism>
    <name type="scientific">Thermoplasma acidophilum (strain ATCC 25905 / DSM 1728 / JCM 9062 / NBRC 15155 / AMRC-C165)</name>
    <dbReference type="NCBI Taxonomy" id="273075"/>
    <lineage>
        <taxon>Archaea</taxon>
        <taxon>Methanobacteriati</taxon>
        <taxon>Thermoplasmatota</taxon>
        <taxon>Thermoplasmata</taxon>
        <taxon>Thermoplasmatales</taxon>
        <taxon>Thermoplasmataceae</taxon>
        <taxon>Thermoplasma</taxon>
    </lineage>
</organism>
<gene>
    <name type="primary">eif5a</name>
    <name type="ordered locus">Ta1059</name>
</gene>